<comment type="function">
    <text evidence="3">May play a role pre-mRNA splicing through the association with the splicing factor SF3B complex which is involved in branch-site recognition.</text>
</comment>
<comment type="subunit">
    <text evidence="3">Associates with splicing factor SF3B complex, involved in branch-site recognition.</text>
</comment>
<comment type="subcellular location">
    <subcellularLocation>
        <location evidence="4">Nucleus</location>
    </subcellularLocation>
</comment>
<gene>
    <name type="primary">CCDC97</name>
</gene>
<sequence>MEAVATATAAKEPDKGCIEPGPGHWGELSRTPVPSKPQDKVEAAEATPVALDSDTSGAENAAVSAMLHAVAASRLPVCSQQQGEPDLTEHEKVAILAQLYHEKPLVFLERFRTGLREEHLACFGHVRGDHRADFYCAEVARQGTARPRTLRTRLRNRRYAALRELIQGGEYFSDEQMRFRAPLLYEQYIGQYLTQEELSARTPTHQPPKPGSPGRPACPLSNLLLQSYEERELQQRLLQQQEEEEACLEEEEEEEDSDEEDQRSGKDSEAWVPDSEERLILREEFTSRMHQRFLDGKDGDFDYSTVDDNPDFDNLDIVARDEEERYFDEEEPEDAPSPELDGD</sequence>
<proteinExistence type="evidence at protein level"/>
<dbReference type="EMBL" id="BC007575">
    <property type="protein sequence ID" value="AAH07575.1"/>
    <property type="molecule type" value="mRNA"/>
</dbReference>
<dbReference type="EMBL" id="BC011577">
    <property type="protein sequence ID" value="AAH11577.1"/>
    <property type="molecule type" value="mRNA"/>
</dbReference>
<dbReference type="EMBL" id="AL833726">
    <property type="protein sequence ID" value="CAH56251.1"/>
    <property type="molecule type" value="mRNA"/>
</dbReference>
<dbReference type="CCDS" id="CCDS12578.1"/>
<dbReference type="RefSeq" id="NP_443080.1">
    <property type="nucleotide sequence ID" value="NM_052848.3"/>
</dbReference>
<dbReference type="SMR" id="Q96F63"/>
<dbReference type="BioGRID" id="124693">
    <property type="interactions" value="68"/>
</dbReference>
<dbReference type="FunCoup" id="Q96F63">
    <property type="interactions" value="2468"/>
</dbReference>
<dbReference type="IntAct" id="Q96F63">
    <property type="interactions" value="41"/>
</dbReference>
<dbReference type="MINT" id="Q96F63"/>
<dbReference type="STRING" id="9606.ENSP00000269967"/>
<dbReference type="GlyGen" id="Q96F63">
    <property type="glycosylation" value="1 site, 1 O-linked glycan (1 site)"/>
</dbReference>
<dbReference type="iPTMnet" id="Q96F63"/>
<dbReference type="PhosphoSitePlus" id="Q96F63"/>
<dbReference type="BioMuta" id="CCDC97"/>
<dbReference type="DMDM" id="74731660"/>
<dbReference type="jPOST" id="Q96F63"/>
<dbReference type="MassIVE" id="Q96F63"/>
<dbReference type="PaxDb" id="9606-ENSP00000269967"/>
<dbReference type="PeptideAtlas" id="Q96F63"/>
<dbReference type="ProteomicsDB" id="76498"/>
<dbReference type="Pumba" id="Q96F63"/>
<dbReference type="Antibodypedia" id="48733">
    <property type="antibodies" value="126 antibodies from 19 providers"/>
</dbReference>
<dbReference type="DNASU" id="90324"/>
<dbReference type="Ensembl" id="ENST00000269967.4">
    <property type="protein sequence ID" value="ENSP00000269967.2"/>
    <property type="gene ID" value="ENSG00000142039.4"/>
</dbReference>
<dbReference type="GeneID" id="90324"/>
<dbReference type="KEGG" id="hsa:90324"/>
<dbReference type="MANE-Select" id="ENST00000269967.4">
    <property type="protein sequence ID" value="ENSP00000269967.2"/>
    <property type="RefSeq nucleotide sequence ID" value="NM_052848.3"/>
    <property type="RefSeq protein sequence ID" value="NP_443080.1"/>
</dbReference>
<dbReference type="UCSC" id="uc002oqg.3">
    <property type="organism name" value="human"/>
</dbReference>
<dbReference type="AGR" id="HGNC:28289"/>
<dbReference type="CTD" id="90324"/>
<dbReference type="DisGeNET" id="90324"/>
<dbReference type="GeneCards" id="CCDC97"/>
<dbReference type="HGNC" id="HGNC:28289">
    <property type="gene designation" value="CCDC97"/>
</dbReference>
<dbReference type="HPA" id="ENSG00000142039">
    <property type="expression patterns" value="Low tissue specificity"/>
</dbReference>
<dbReference type="neXtProt" id="NX_Q96F63"/>
<dbReference type="OpenTargets" id="ENSG00000142039"/>
<dbReference type="PharmGKB" id="PA144596464"/>
<dbReference type="VEuPathDB" id="HostDB:ENSG00000142039"/>
<dbReference type="eggNOG" id="KOG3044">
    <property type="taxonomic scope" value="Eukaryota"/>
</dbReference>
<dbReference type="GeneTree" id="ENSGT00390000015495"/>
<dbReference type="HOGENOM" id="CLU_058245_1_1_1"/>
<dbReference type="InParanoid" id="Q96F63"/>
<dbReference type="OMA" id="LDVYMRH"/>
<dbReference type="OrthoDB" id="333176at2759"/>
<dbReference type="PAN-GO" id="Q96F63">
    <property type="GO annotations" value="0 GO annotations based on evolutionary models"/>
</dbReference>
<dbReference type="PhylomeDB" id="Q96F63"/>
<dbReference type="TreeFam" id="TF316152"/>
<dbReference type="PathwayCommons" id="Q96F63"/>
<dbReference type="SignaLink" id="Q96F63"/>
<dbReference type="BioGRID-ORCS" id="90324">
    <property type="hits" value="15 hits in 1161 CRISPR screens"/>
</dbReference>
<dbReference type="ChiTaRS" id="CCDC97">
    <property type="organism name" value="human"/>
</dbReference>
<dbReference type="GenomeRNAi" id="90324"/>
<dbReference type="Pharos" id="Q96F63">
    <property type="development level" value="Tdark"/>
</dbReference>
<dbReference type="PRO" id="PR:Q96F63"/>
<dbReference type="Proteomes" id="UP000005640">
    <property type="component" value="Chromosome 19"/>
</dbReference>
<dbReference type="RNAct" id="Q96F63">
    <property type="molecule type" value="protein"/>
</dbReference>
<dbReference type="Bgee" id="ENSG00000142039">
    <property type="expression patterns" value="Expressed in granulocyte and 169 other cell types or tissues"/>
</dbReference>
<dbReference type="ExpressionAtlas" id="Q96F63">
    <property type="expression patterns" value="baseline and differential"/>
</dbReference>
<dbReference type="GO" id="GO:0005634">
    <property type="term" value="C:nucleus"/>
    <property type="evidence" value="ECO:0007669"/>
    <property type="project" value="UniProtKB-SubCell"/>
</dbReference>
<dbReference type="InterPro" id="IPR040233">
    <property type="entry name" value="CCD97-like_C"/>
</dbReference>
<dbReference type="InterPro" id="IPR018613">
    <property type="entry name" value="Ccdc97-like"/>
</dbReference>
<dbReference type="PANTHER" id="PTHR31840">
    <property type="entry name" value="COILED-COIL DOMAIN-CONTAINING PROTEIN 97"/>
    <property type="match status" value="1"/>
</dbReference>
<dbReference type="PANTHER" id="PTHR31840:SF1">
    <property type="entry name" value="COILED-COIL DOMAIN-CONTAINING PROTEIN 97"/>
    <property type="match status" value="1"/>
</dbReference>
<dbReference type="Pfam" id="PF09747">
    <property type="entry name" value="CCD97-like_C"/>
    <property type="match status" value="1"/>
</dbReference>
<protein>
    <recommendedName>
        <fullName>Coiled-coil domain-containing protein 97</fullName>
    </recommendedName>
</protein>
<feature type="chain" id="PRO_0000286096" description="Coiled-coil domain-containing protein 97">
    <location>
        <begin position="1"/>
        <end position="343"/>
    </location>
</feature>
<feature type="region of interest" description="Disordered" evidence="2">
    <location>
        <begin position="1"/>
        <end position="37"/>
    </location>
</feature>
<feature type="region of interest" description="Disordered" evidence="2">
    <location>
        <begin position="200"/>
        <end position="220"/>
    </location>
</feature>
<feature type="region of interest" description="Disordered" evidence="2">
    <location>
        <begin position="234"/>
        <end position="277"/>
    </location>
</feature>
<feature type="region of interest" description="Disordered" evidence="2">
    <location>
        <begin position="292"/>
        <end position="343"/>
    </location>
</feature>
<feature type="coiled-coil region" evidence="1">
    <location>
        <begin position="224"/>
        <end position="262"/>
    </location>
</feature>
<feature type="compositionally biased region" description="Acidic residues" evidence="2">
    <location>
        <begin position="241"/>
        <end position="261"/>
    </location>
</feature>
<feature type="compositionally biased region" description="Basic and acidic residues" evidence="2">
    <location>
        <begin position="262"/>
        <end position="277"/>
    </location>
</feature>
<feature type="compositionally biased region" description="Acidic residues" evidence="2">
    <location>
        <begin position="324"/>
        <end position="343"/>
    </location>
</feature>
<feature type="modified residue" description="N-acetylmethionine" evidence="6">
    <location>
        <position position="1"/>
    </location>
</feature>
<feature type="modified residue" description="Phosphothreonine" evidence="8">
    <location>
        <position position="47"/>
    </location>
</feature>
<feature type="modified residue" description="Phosphoserine" evidence="5 8">
    <location>
        <position position="275"/>
    </location>
</feature>
<feature type="modified residue" description="Phosphoserine" evidence="5 7 8 9">
    <location>
        <position position="337"/>
    </location>
</feature>
<reference key="1">
    <citation type="journal article" date="2004" name="Genome Res.">
        <title>The status, quality, and expansion of the NIH full-length cDNA project: the Mammalian Gene Collection (MGC).</title>
        <authorList>
            <consortium name="The MGC Project Team"/>
        </authorList>
    </citation>
    <scope>NUCLEOTIDE SEQUENCE [LARGE SCALE MRNA]</scope>
    <source>
        <tissue>Placenta</tissue>
    </source>
</reference>
<reference key="2">
    <citation type="journal article" date="2007" name="BMC Genomics">
        <title>The full-ORF clone resource of the German cDNA consortium.</title>
        <authorList>
            <person name="Bechtel S."/>
            <person name="Rosenfelder H."/>
            <person name="Duda A."/>
            <person name="Schmidt C.P."/>
            <person name="Ernst U."/>
            <person name="Wellenreuther R."/>
            <person name="Mehrle A."/>
            <person name="Schuster C."/>
            <person name="Bahr A."/>
            <person name="Bloecker H."/>
            <person name="Heubner D."/>
            <person name="Hoerlein A."/>
            <person name="Michel G."/>
            <person name="Wedler H."/>
            <person name="Koehrer K."/>
            <person name="Ottenwaelder B."/>
            <person name="Poustka A."/>
            <person name="Wiemann S."/>
            <person name="Schupp I."/>
        </authorList>
    </citation>
    <scope>NUCLEOTIDE SEQUENCE [LARGE SCALE MRNA] OF 16-343</scope>
    <source>
        <tissue>Stomach</tissue>
    </source>
</reference>
<reference key="3">
    <citation type="journal article" date="2008" name="Proc. Natl. Acad. Sci. U.S.A.">
        <title>A quantitative atlas of mitotic phosphorylation.</title>
        <authorList>
            <person name="Dephoure N."/>
            <person name="Zhou C."/>
            <person name="Villen J."/>
            <person name="Beausoleil S.A."/>
            <person name="Bakalarski C.E."/>
            <person name="Elledge S.J."/>
            <person name="Gygi S.P."/>
        </authorList>
    </citation>
    <scope>PHOSPHORYLATION [LARGE SCALE ANALYSIS] AT SER-275 AND SER-337</scope>
    <scope>IDENTIFICATION BY MASS SPECTROMETRY [LARGE SCALE ANALYSIS]</scope>
    <source>
        <tissue>Cervix carcinoma</tissue>
    </source>
</reference>
<reference key="4">
    <citation type="journal article" date="2009" name="Anal. Chem.">
        <title>Lys-N and trypsin cover complementary parts of the phosphoproteome in a refined SCX-based approach.</title>
        <authorList>
            <person name="Gauci S."/>
            <person name="Helbig A.O."/>
            <person name="Slijper M."/>
            <person name="Krijgsveld J."/>
            <person name="Heck A.J."/>
            <person name="Mohammed S."/>
        </authorList>
    </citation>
    <scope>ACETYLATION [LARGE SCALE ANALYSIS] AT MET-1</scope>
    <scope>IDENTIFICATION BY MASS SPECTROMETRY [LARGE SCALE ANALYSIS]</scope>
</reference>
<reference key="5">
    <citation type="journal article" date="2009" name="Sci. Signal.">
        <title>Quantitative phosphoproteomic analysis of T cell receptor signaling reveals system-wide modulation of protein-protein interactions.</title>
        <authorList>
            <person name="Mayya V."/>
            <person name="Lundgren D.H."/>
            <person name="Hwang S.-I."/>
            <person name="Rezaul K."/>
            <person name="Wu L."/>
            <person name="Eng J.K."/>
            <person name="Rodionov V."/>
            <person name="Han D.K."/>
        </authorList>
    </citation>
    <scope>PHOSPHORYLATION [LARGE SCALE ANALYSIS] AT SER-337</scope>
    <scope>IDENTIFICATION BY MASS SPECTROMETRY [LARGE SCALE ANALYSIS]</scope>
    <source>
        <tissue>Leukemic T-cell</tissue>
    </source>
</reference>
<reference key="6">
    <citation type="journal article" date="2010" name="Sci. Signal.">
        <title>Quantitative phosphoproteomics reveals widespread full phosphorylation site occupancy during mitosis.</title>
        <authorList>
            <person name="Olsen J.V."/>
            <person name="Vermeulen M."/>
            <person name="Santamaria A."/>
            <person name="Kumar C."/>
            <person name="Miller M.L."/>
            <person name="Jensen L.J."/>
            <person name="Gnad F."/>
            <person name="Cox J."/>
            <person name="Jensen T.S."/>
            <person name="Nigg E.A."/>
            <person name="Brunak S."/>
            <person name="Mann M."/>
        </authorList>
    </citation>
    <scope>PHOSPHORYLATION [LARGE SCALE ANALYSIS] AT THR-47; SER-275 AND SER-337</scope>
    <scope>IDENTIFICATION BY MASS SPECTROMETRY [LARGE SCALE ANALYSIS]</scope>
    <source>
        <tissue>Cervix carcinoma</tissue>
    </source>
</reference>
<reference key="7">
    <citation type="journal article" date="2011" name="Sci. Signal.">
        <title>System-wide temporal characterization of the proteome and phosphoproteome of human embryonic stem cell differentiation.</title>
        <authorList>
            <person name="Rigbolt K.T."/>
            <person name="Prokhorova T.A."/>
            <person name="Akimov V."/>
            <person name="Henningsen J."/>
            <person name="Johansen P.T."/>
            <person name="Kratchmarova I."/>
            <person name="Kassem M."/>
            <person name="Mann M."/>
            <person name="Olsen J.V."/>
            <person name="Blagoev B."/>
        </authorList>
    </citation>
    <scope>PHOSPHORYLATION [LARGE SCALE ANALYSIS] AT SER-337</scope>
    <scope>IDENTIFICATION BY MASS SPECTROMETRY [LARGE SCALE ANALYSIS]</scope>
</reference>
<reference key="8">
    <citation type="journal article" date="2015" name="Nature">
        <title>Panorama of ancient metazoan macromolecular complexes.</title>
        <authorList>
            <person name="Wan C."/>
            <person name="Borgeson B."/>
            <person name="Phanse S."/>
            <person name="Tu F."/>
            <person name="Drew K."/>
            <person name="Clark G."/>
            <person name="Xiong X."/>
            <person name="Kagan O."/>
            <person name="Kwan J."/>
            <person name="Bezginov A."/>
            <person name="Chessman K."/>
            <person name="Pal S."/>
            <person name="Cromar G."/>
            <person name="Papoulas O."/>
            <person name="Ni Z."/>
            <person name="Boutz D.R."/>
            <person name="Stoilova S."/>
            <person name="Havugimana P.C."/>
            <person name="Guo X."/>
            <person name="Malty R.H."/>
            <person name="Sarov M."/>
            <person name="Greenblatt J."/>
            <person name="Babu M."/>
            <person name="Derry W.B."/>
            <person name="Tillier E.R."/>
            <person name="Wallingford J.B."/>
            <person name="Parkinson J."/>
            <person name="Marcotte E.M."/>
            <person name="Emili A."/>
        </authorList>
    </citation>
    <scope>FUNCTION</scope>
    <scope>SUBUNIT</scope>
    <scope>SUBCELLULAR LOCATION</scope>
</reference>
<organism>
    <name type="scientific">Homo sapiens</name>
    <name type="common">Human</name>
    <dbReference type="NCBI Taxonomy" id="9606"/>
    <lineage>
        <taxon>Eukaryota</taxon>
        <taxon>Metazoa</taxon>
        <taxon>Chordata</taxon>
        <taxon>Craniata</taxon>
        <taxon>Vertebrata</taxon>
        <taxon>Euteleostomi</taxon>
        <taxon>Mammalia</taxon>
        <taxon>Eutheria</taxon>
        <taxon>Euarchontoglires</taxon>
        <taxon>Primates</taxon>
        <taxon>Haplorrhini</taxon>
        <taxon>Catarrhini</taxon>
        <taxon>Hominidae</taxon>
        <taxon>Homo</taxon>
    </lineage>
</organism>
<name>CCD97_HUMAN</name>
<evidence type="ECO:0000255" key="1"/>
<evidence type="ECO:0000256" key="2">
    <source>
        <dbReference type="SAM" id="MobiDB-lite"/>
    </source>
</evidence>
<evidence type="ECO:0000269" key="3">
    <source>
    </source>
</evidence>
<evidence type="ECO:0000305" key="4">
    <source>
    </source>
</evidence>
<evidence type="ECO:0007744" key="5">
    <source>
    </source>
</evidence>
<evidence type="ECO:0007744" key="6">
    <source>
    </source>
</evidence>
<evidence type="ECO:0007744" key="7">
    <source>
    </source>
</evidence>
<evidence type="ECO:0007744" key="8">
    <source>
    </source>
</evidence>
<evidence type="ECO:0007744" key="9">
    <source>
    </source>
</evidence>
<keyword id="KW-0007">Acetylation</keyword>
<keyword id="KW-0175">Coiled coil</keyword>
<keyword id="KW-0539">Nucleus</keyword>
<keyword id="KW-0597">Phosphoprotein</keyword>
<keyword id="KW-1267">Proteomics identification</keyword>
<keyword id="KW-1185">Reference proteome</keyword>
<accession>Q96F63</accession>
<accession>Q658N6</accession>
<accession>Q96IF3</accession>